<proteinExistence type="inferred from homology"/>
<keyword id="KW-0963">Cytoplasm</keyword>
<keyword id="KW-0418">Kinase</keyword>
<keyword id="KW-1185">Reference proteome</keyword>
<keyword id="KW-0808">Transferase</keyword>
<organism>
    <name type="scientific">Escherichia coli O139:H28 (strain E24377A / ETEC)</name>
    <dbReference type="NCBI Taxonomy" id="331111"/>
    <lineage>
        <taxon>Bacteria</taxon>
        <taxon>Pseudomonadati</taxon>
        <taxon>Pseudomonadota</taxon>
        <taxon>Gammaproteobacteria</taxon>
        <taxon>Enterobacterales</taxon>
        <taxon>Enterobacteriaceae</taxon>
        <taxon>Escherichia</taxon>
    </lineage>
</organism>
<accession>A7ZLW9</accession>
<protein>
    <recommendedName>
        <fullName evidence="1">Autoinducer-2 kinase</fullName>
        <shortName evidence="1">AI-2 kinase</shortName>
        <ecNumber evidence="1">2.7.1.189</ecNumber>
    </recommendedName>
</protein>
<evidence type="ECO:0000255" key="1">
    <source>
        <dbReference type="HAMAP-Rule" id="MF_02053"/>
    </source>
</evidence>
<comment type="function">
    <text evidence="1">Catalyzes the phosphorylation of autoinducer-2 (AI-2) to phospho-AI-2, which subsequently inactivates the transcriptional regulator LsrR and leads to the transcription of the lsr operon. Phosphorylates the ring-open form of (S)-4,5-dihydroxypentane-2,3-dione (DPD), which is the precursor to all AI-2 signaling molecules, at the C5 position.</text>
</comment>
<comment type="catalytic activity">
    <reaction evidence="1">
        <text>(S)-4,5-dihydroxypentane-2,3-dione + ATP = (2S)-2-hydroxy-3,4-dioxopentyl phosphate + ADP + H(+)</text>
        <dbReference type="Rhea" id="RHEA:15377"/>
        <dbReference type="ChEBI" id="CHEBI:15378"/>
        <dbReference type="ChEBI" id="CHEBI:29484"/>
        <dbReference type="ChEBI" id="CHEBI:30616"/>
        <dbReference type="ChEBI" id="CHEBI:71677"/>
        <dbReference type="ChEBI" id="CHEBI:456216"/>
        <dbReference type="EC" id="2.7.1.189"/>
    </reaction>
</comment>
<comment type="subcellular location">
    <subcellularLocation>
        <location evidence="1">Cytoplasm</location>
    </subcellularLocation>
</comment>
<comment type="similarity">
    <text evidence="1">Belongs to the FGGY kinase family.</text>
</comment>
<reference key="1">
    <citation type="journal article" date="2008" name="J. Bacteriol.">
        <title>The pangenome structure of Escherichia coli: comparative genomic analysis of E. coli commensal and pathogenic isolates.</title>
        <authorList>
            <person name="Rasko D.A."/>
            <person name="Rosovitz M.J."/>
            <person name="Myers G.S.A."/>
            <person name="Mongodin E.F."/>
            <person name="Fricke W.F."/>
            <person name="Gajer P."/>
            <person name="Crabtree J."/>
            <person name="Sebaihia M."/>
            <person name="Thomson N.R."/>
            <person name="Chaudhuri R."/>
            <person name="Henderson I.R."/>
            <person name="Sperandio V."/>
            <person name="Ravel J."/>
        </authorList>
    </citation>
    <scope>NUCLEOTIDE SEQUENCE [LARGE SCALE GENOMIC DNA]</scope>
    <source>
        <strain>E24377A / ETEC</strain>
    </source>
</reference>
<dbReference type="EC" id="2.7.1.189" evidence="1"/>
<dbReference type="EMBL" id="CP000800">
    <property type="protein sequence ID" value="ABV16665.1"/>
    <property type="molecule type" value="Genomic_DNA"/>
</dbReference>
<dbReference type="RefSeq" id="WP_000113127.1">
    <property type="nucleotide sequence ID" value="NC_009801.1"/>
</dbReference>
<dbReference type="SMR" id="A7ZLW9"/>
<dbReference type="KEGG" id="ecw:EcE24377A_1712"/>
<dbReference type="HOGENOM" id="CLU_009281_3_4_6"/>
<dbReference type="Proteomes" id="UP000001122">
    <property type="component" value="Chromosome"/>
</dbReference>
<dbReference type="GO" id="GO:0005737">
    <property type="term" value="C:cytoplasm"/>
    <property type="evidence" value="ECO:0007669"/>
    <property type="project" value="UniProtKB-SubCell"/>
</dbReference>
<dbReference type="GO" id="GO:0071518">
    <property type="term" value="F:autoinducer-2 kinase activity"/>
    <property type="evidence" value="ECO:0007669"/>
    <property type="project" value="UniProtKB-UniRule"/>
</dbReference>
<dbReference type="GO" id="GO:0005975">
    <property type="term" value="P:carbohydrate metabolic process"/>
    <property type="evidence" value="ECO:0007669"/>
    <property type="project" value="InterPro"/>
</dbReference>
<dbReference type="GO" id="GO:0009372">
    <property type="term" value="P:quorum sensing"/>
    <property type="evidence" value="ECO:0007669"/>
    <property type="project" value="InterPro"/>
</dbReference>
<dbReference type="CDD" id="cd07775">
    <property type="entry name" value="ASKHA_NBD_FGGY_AI-2K"/>
    <property type="match status" value="1"/>
</dbReference>
<dbReference type="FunFam" id="3.30.420.40:FF:000155">
    <property type="entry name" value="Autoinducer-2 kinase"/>
    <property type="match status" value="1"/>
</dbReference>
<dbReference type="FunFam" id="3.30.420.40:FF:000160">
    <property type="entry name" value="Autoinducer-2 kinase"/>
    <property type="match status" value="1"/>
</dbReference>
<dbReference type="Gene3D" id="3.30.420.40">
    <property type="match status" value="2"/>
</dbReference>
<dbReference type="HAMAP" id="MF_02053">
    <property type="entry name" value="LsrK"/>
    <property type="match status" value="1"/>
</dbReference>
<dbReference type="InterPro" id="IPR033676">
    <property type="entry name" value="AI-2_kinase"/>
</dbReference>
<dbReference type="InterPro" id="IPR043129">
    <property type="entry name" value="ATPase_NBD"/>
</dbReference>
<dbReference type="InterPro" id="IPR000577">
    <property type="entry name" value="Carb_kinase_FGGY"/>
</dbReference>
<dbReference type="InterPro" id="IPR018485">
    <property type="entry name" value="FGGY_C"/>
</dbReference>
<dbReference type="InterPro" id="IPR050406">
    <property type="entry name" value="FGGY_Carb_Kinase"/>
</dbReference>
<dbReference type="InterPro" id="IPR018484">
    <property type="entry name" value="FGGY_N"/>
</dbReference>
<dbReference type="NCBIfam" id="NF008187">
    <property type="entry name" value="PRK10939.1"/>
    <property type="match status" value="1"/>
</dbReference>
<dbReference type="PANTHER" id="PTHR43095:SF1">
    <property type="entry name" value="AUTOINDUCER-2 KINASE"/>
    <property type="match status" value="1"/>
</dbReference>
<dbReference type="PANTHER" id="PTHR43095">
    <property type="entry name" value="SUGAR KINASE"/>
    <property type="match status" value="1"/>
</dbReference>
<dbReference type="Pfam" id="PF02782">
    <property type="entry name" value="FGGY_C"/>
    <property type="match status" value="1"/>
</dbReference>
<dbReference type="Pfam" id="PF00370">
    <property type="entry name" value="FGGY_N"/>
    <property type="match status" value="1"/>
</dbReference>
<dbReference type="PIRSF" id="PIRSF000538">
    <property type="entry name" value="GlpK"/>
    <property type="match status" value="1"/>
</dbReference>
<dbReference type="SUPFAM" id="SSF53067">
    <property type="entry name" value="Actin-like ATPase domain"/>
    <property type="match status" value="2"/>
</dbReference>
<feature type="chain" id="PRO_0000351590" description="Autoinducer-2 kinase">
    <location>
        <begin position="1"/>
        <end position="530"/>
    </location>
</feature>
<sequence length="530" mass="57529">MARLFTPSESKYYLMALDAGTGSIRAVIFDLEGNQIAVGQAEWRHLAVPDVPGSMEFDLNKNWQLACECMRQALHNAGIAPEYIAAVSACSMREGIVLYNNEGAPIWACANVDARAAREVSELKELHNNTFENEVYRATGQTLALSAIPRLLWLAHHRSDIYRQASTITMISDWLAYMLSGELAVDPSNAGTTGLLDLTTRDWKPALLDMAGLRADILSPVKETGTLLGVVSSQAAELCGLKAGTPVVVGGGDVQLGCLGLGVVRPAQTAVLGGTFWQQVVNLAAPVTDPEMNVRVNPHVIPGMVQAESISFFTGLTMRWFRDAFCAEEKLIAERLGIDTYTLLEEMASRVPPGSWGVMPIFSDRMRFKTWYHAAPSFINLSIDPDKCNKATLFRALEENAAIVSACNLQQIADFSNIHPSSLVFAGGGSKGKLWSQILADVSGLPVNIPVVKEATALGCAIAAGVGAGIFSSMAETGERLVRWERTHTPDPEKHELYQDSRDKWQAVYQDQLGLVDHGLTTSLWKAPGL</sequence>
<gene>
    <name evidence="1" type="primary">lsrK</name>
    <name type="ordered locus">EcE24377A_1712</name>
</gene>
<name>LSRK_ECO24</name>